<organism>
    <name type="scientific">Homo sapiens</name>
    <name type="common">Human</name>
    <dbReference type="NCBI Taxonomy" id="9606"/>
    <lineage>
        <taxon>Eukaryota</taxon>
        <taxon>Metazoa</taxon>
        <taxon>Chordata</taxon>
        <taxon>Craniata</taxon>
        <taxon>Vertebrata</taxon>
        <taxon>Euteleostomi</taxon>
        <taxon>Mammalia</taxon>
        <taxon>Eutheria</taxon>
        <taxon>Euarchontoglires</taxon>
        <taxon>Primates</taxon>
        <taxon>Haplorrhini</taxon>
        <taxon>Catarrhini</taxon>
        <taxon>Hominidae</taxon>
        <taxon>Homo</taxon>
    </lineage>
</organism>
<keyword id="KW-0002">3D-structure</keyword>
<keyword id="KW-0225">Disease variant</keyword>
<keyword id="KW-1015">Disulfide bond</keyword>
<keyword id="KW-0242">Dwarfism</keyword>
<keyword id="KW-0248">Ehlers-Danlos syndrome</keyword>
<keyword id="KW-0325">Glycoprotein</keyword>
<keyword id="KW-0328">Glycosyltransferase</keyword>
<keyword id="KW-0333">Golgi apparatus</keyword>
<keyword id="KW-0464">Manganese</keyword>
<keyword id="KW-0472">Membrane</keyword>
<keyword id="KW-0479">Metal-binding</keyword>
<keyword id="KW-1267">Proteomics identification</keyword>
<keyword id="KW-1185">Reference proteome</keyword>
<keyword id="KW-0735">Signal-anchor</keyword>
<keyword id="KW-0808">Transferase</keyword>
<keyword id="KW-0812">Transmembrane</keyword>
<keyword id="KW-1133">Transmembrane helix</keyword>
<gene>
    <name type="primary">B4GALT7</name>
    <name type="synonym">XGALT1</name>
    <name type="ORF">UNQ748/PRO1478</name>
</gene>
<dbReference type="EC" id="2.4.1.-"/>
<dbReference type="EC" id="2.4.1.133"/>
<dbReference type="EMBL" id="AJ005382">
    <property type="protein sequence ID" value="CAB56424.1"/>
    <property type="molecule type" value="mRNA"/>
</dbReference>
<dbReference type="EMBL" id="AB028600">
    <property type="protein sequence ID" value="BAA83414.1"/>
    <property type="molecule type" value="mRNA"/>
</dbReference>
<dbReference type="EMBL" id="AF142675">
    <property type="protein sequence ID" value="AAF22225.1"/>
    <property type="molecule type" value="mRNA"/>
</dbReference>
<dbReference type="EMBL" id="AY358578">
    <property type="protein sequence ID" value="AAQ88941.1"/>
    <property type="molecule type" value="mRNA"/>
</dbReference>
<dbReference type="EMBL" id="AK023506">
    <property type="protein sequence ID" value="BAG51201.1"/>
    <property type="molecule type" value="mRNA"/>
</dbReference>
<dbReference type="EMBL" id="CH471195">
    <property type="protein sequence ID" value="EAW84965.1"/>
    <property type="molecule type" value="Genomic_DNA"/>
</dbReference>
<dbReference type="EMBL" id="BC007317">
    <property type="protein sequence ID" value="AAH07317.1"/>
    <property type="molecule type" value="mRNA"/>
</dbReference>
<dbReference type="EMBL" id="BC062983">
    <property type="protein sequence ID" value="AAH62983.1"/>
    <property type="molecule type" value="mRNA"/>
</dbReference>
<dbReference type="EMBL" id="BC072403">
    <property type="protein sequence ID" value="AAH72403.1"/>
    <property type="molecule type" value="mRNA"/>
</dbReference>
<dbReference type="CCDS" id="CCDS4429.1"/>
<dbReference type="RefSeq" id="NP_009186.1">
    <property type="nucleotide sequence ID" value="NM_007255.3"/>
</dbReference>
<dbReference type="PDB" id="4IRP">
    <property type="method" value="X-ray"/>
    <property type="resolution" value="2.10 A"/>
    <property type="chains" value="A/B=81-327"/>
</dbReference>
<dbReference type="PDB" id="4IRQ">
    <property type="method" value="X-ray"/>
    <property type="resolution" value="2.30 A"/>
    <property type="chains" value="A/B/C/D=81-327"/>
</dbReference>
<dbReference type="PDBsum" id="4IRP"/>
<dbReference type="PDBsum" id="4IRQ"/>
<dbReference type="SMR" id="Q9UBV7"/>
<dbReference type="BioGRID" id="116441">
    <property type="interactions" value="79"/>
</dbReference>
<dbReference type="FunCoup" id="Q9UBV7">
    <property type="interactions" value="2205"/>
</dbReference>
<dbReference type="IntAct" id="Q9UBV7">
    <property type="interactions" value="65"/>
</dbReference>
<dbReference type="STRING" id="9606.ENSP00000029410"/>
<dbReference type="CAZy" id="GT7">
    <property type="family name" value="Glycosyltransferase Family 7"/>
</dbReference>
<dbReference type="GlyCosmos" id="Q9UBV7">
    <property type="glycosylation" value="1 site, No reported glycans"/>
</dbReference>
<dbReference type="GlyGen" id="Q9UBV7">
    <property type="glycosylation" value="5 sites, 1 O-linked glycan (1 site)"/>
</dbReference>
<dbReference type="iPTMnet" id="Q9UBV7"/>
<dbReference type="PhosphoSitePlus" id="Q9UBV7"/>
<dbReference type="SwissPalm" id="Q9UBV7"/>
<dbReference type="BioMuta" id="B4GALT7"/>
<dbReference type="DMDM" id="13123990"/>
<dbReference type="jPOST" id="Q9UBV7"/>
<dbReference type="MassIVE" id="Q9UBV7"/>
<dbReference type="PaxDb" id="9606-ENSP00000029410"/>
<dbReference type="PeptideAtlas" id="Q9UBV7"/>
<dbReference type="ProteomicsDB" id="84081"/>
<dbReference type="Pumba" id="Q9UBV7"/>
<dbReference type="Antibodypedia" id="29347">
    <property type="antibodies" value="113 antibodies from 21 providers"/>
</dbReference>
<dbReference type="DNASU" id="11285"/>
<dbReference type="Ensembl" id="ENST00000029410.10">
    <property type="protein sequence ID" value="ENSP00000029410.5"/>
    <property type="gene ID" value="ENSG00000027847.14"/>
</dbReference>
<dbReference type="GeneID" id="11285"/>
<dbReference type="KEGG" id="hsa:11285"/>
<dbReference type="MANE-Select" id="ENST00000029410.10">
    <property type="protein sequence ID" value="ENSP00000029410.5"/>
    <property type="RefSeq nucleotide sequence ID" value="NM_007255.3"/>
    <property type="RefSeq protein sequence ID" value="NP_009186.1"/>
</dbReference>
<dbReference type="UCSC" id="uc003mhy.4">
    <property type="organism name" value="human"/>
</dbReference>
<dbReference type="AGR" id="HGNC:930"/>
<dbReference type="CTD" id="11285"/>
<dbReference type="DisGeNET" id="11285"/>
<dbReference type="GeneCards" id="B4GALT7"/>
<dbReference type="HGNC" id="HGNC:930">
    <property type="gene designation" value="B4GALT7"/>
</dbReference>
<dbReference type="HPA" id="ENSG00000027847">
    <property type="expression patterns" value="Low tissue specificity"/>
</dbReference>
<dbReference type="MalaCards" id="B4GALT7"/>
<dbReference type="MIM" id="130070">
    <property type="type" value="phenotype"/>
</dbReference>
<dbReference type="MIM" id="604327">
    <property type="type" value="gene"/>
</dbReference>
<dbReference type="neXtProt" id="NX_Q9UBV7"/>
<dbReference type="OpenTargets" id="ENSG00000027847"/>
<dbReference type="Orphanet" id="75496">
    <property type="disease" value="B4GALT7-related spondylodysplastic Ehlers-Danlos syndrome"/>
</dbReference>
<dbReference type="PharmGKB" id="PA25229"/>
<dbReference type="VEuPathDB" id="HostDB:ENSG00000027847"/>
<dbReference type="eggNOG" id="KOG3917">
    <property type="taxonomic scope" value="Eukaryota"/>
</dbReference>
<dbReference type="GeneTree" id="ENSGT00940000157712"/>
<dbReference type="HOGENOM" id="CLU_044391_5_1_1"/>
<dbReference type="InParanoid" id="Q9UBV7"/>
<dbReference type="OMA" id="NWLFVCG"/>
<dbReference type="OrthoDB" id="6020664at2759"/>
<dbReference type="PAN-GO" id="Q9UBV7">
    <property type="GO annotations" value="4 GO annotations based on evolutionary models"/>
</dbReference>
<dbReference type="PhylomeDB" id="Q9UBV7"/>
<dbReference type="TreeFam" id="TF312834"/>
<dbReference type="BioCyc" id="MetaCyc:HS00459-MONOMER"/>
<dbReference type="BRENDA" id="2.4.1.133">
    <property type="organism ID" value="2681"/>
</dbReference>
<dbReference type="BRENDA" id="2.4.1.38">
    <property type="organism ID" value="2681"/>
</dbReference>
<dbReference type="PathwayCommons" id="Q9UBV7"/>
<dbReference type="Reactome" id="R-HSA-1971475">
    <property type="pathway name" value="A tetrasaccharide linker sequence is required for GAG synthesis"/>
</dbReference>
<dbReference type="Reactome" id="R-HSA-3560783">
    <property type="pathway name" value="Defective B4GALT7 causes EDS, progeroid type"/>
</dbReference>
<dbReference type="SignaLink" id="Q9UBV7"/>
<dbReference type="UniPathway" id="UPA00378"/>
<dbReference type="BioGRID-ORCS" id="11285">
    <property type="hits" value="57 hits in 1167 CRISPR screens"/>
</dbReference>
<dbReference type="EvolutionaryTrace" id="Q9UBV7"/>
<dbReference type="GeneWiki" id="B4GALT7"/>
<dbReference type="GenomeRNAi" id="11285"/>
<dbReference type="Pharos" id="Q9UBV7">
    <property type="development level" value="Tbio"/>
</dbReference>
<dbReference type="PRO" id="PR:Q9UBV7"/>
<dbReference type="Proteomes" id="UP000005640">
    <property type="component" value="Chromosome 5"/>
</dbReference>
<dbReference type="RNAct" id="Q9UBV7">
    <property type="molecule type" value="protein"/>
</dbReference>
<dbReference type="Bgee" id="ENSG00000027847">
    <property type="expression patterns" value="Expressed in tendon of biceps brachii and 177 other cell types or tissues"/>
</dbReference>
<dbReference type="ExpressionAtlas" id="Q9UBV7">
    <property type="expression patterns" value="baseline and differential"/>
</dbReference>
<dbReference type="GO" id="GO:0005794">
    <property type="term" value="C:Golgi apparatus"/>
    <property type="evidence" value="ECO:0000314"/>
    <property type="project" value="UniProtKB"/>
</dbReference>
<dbReference type="GO" id="GO:0032580">
    <property type="term" value="C:Golgi cisterna membrane"/>
    <property type="evidence" value="ECO:0007669"/>
    <property type="project" value="UniProtKB-SubCell"/>
</dbReference>
<dbReference type="GO" id="GO:0000139">
    <property type="term" value="C:Golgi membrane"/>
    <property type="evidence" value="ECO:0000304"/>
    <property type="project" value="Reactome"/>
</dbReference>
<dbReference type="GO" id="GO:0016020">
    <property type="term" value="C:membrane"/>
    <property type="evidence" value="ECO:0000314"/>
    <property type="project" value="UniProtKB"/>
</dbReference>
<dbReference type="GO" id="GO:0003831">
    <property type="term" value="F:beta-N-acetylglucosaminylglycopeptide beta-1,4-galactosyltransferase activity"/>
    <property type="evidence" value="ECO:0000314"/>
    <property type="project" value="UniProtKB"/>
</dbReference>
<dbReference type="GO" id="GO:0008378">
    <property type="term" value="F:galactosyltransferase activity"/>
    <property type="evidence" value="ECO:0000314"/>
    <property type="project" value="UniProtKB"/>
</dbReference>
<dbReference type="GO" id="GO:0030145">
    <property type="term" value="F:manganese ion binding"/>
    <property type="evidence" value="ECO:0000314"/>
    <property type="project" value="UniProtKB"/>
</dbReference>
<dbReference type="GO" id="GO:0046525">
    <property type="term" value="F:xylosylprotein 4-beta-galactosyltransferase activity"/>
    <property type="evidence" value="ECO:0000314"/>
    <property type="project" value="UniProtKB"/>
</dbReference>
<dbReference type="GO" id="GO:0005975">
    <property type="term" value="P:carbohydrate metabolic process"/>
    <property type="evidence" value="ECO:0007669"/>
    <property type="project" value="InterPro"/>
</dbReference>
<dbReference type="GO" id="GO:0006024">
    <property type="term" value="P:glycosaminoglycan biosynthetic process"/>
    <property type="evidence" value="ECO:0000314"/>
    <property type="project" value="UniProtKB"/>
</dbReference>
<dbReference type="GO" id="GO:0030203">
    <property type="term" value="P:glycosaminoglycan metabolic process"/>
    <property type="evidence" value="ECO:0000304"/>
    <property type="project" value="Reactome"/>
</dbReference>
<dbReference type="GO" id="GO:0070085">
    <property type="term" value="P:glycosylation"/>
    <property type="evidence" value="ECO:0000318"/>
    <property type="project" value="GO_Central"/>
</dbReference>
<dbReference type="GO" id="GO:0048147">
    <property type="term" value="P:negative regulation of fibroblast proliferation"/>
    <property type="evidence" value="ECO:0000315"/>
    <property type="project" value="UniProtKB"/>
</dbReference>
<dbReference type="GO" id="GO:0036211">
    <property type="term" value="P:protein modification process"/>
    <property type="evidence" value="ECO:0000304"/>
    <property type="project" value="ProtInc"/>
</dbReference>
<dbReference type="GO" id="GO:0006487">
    <property type="term" value="P:protein N-linked glycosylation"/>
    <property type="evidence" value="ECO:0000314"/>
    <property type="project" value="UniProtKB"/>
</dbReference>
<dbReference type="GO" id="GO:0030166">
    <property type="term" value="P:proteoglycan biosynthetic process"/>
    <property type="evidence" value="ECO:0000318"/>
    <property type="project" value="GO_Central"/>
</dbReference>
<dbReference type="GO" id="GO:0006029">
    <property type="term" value="P:proteoglycan metabolic process"/>
    <property type="evidence" value="ECO:0000315"/>
    <property type="project" value="UniProtKB"/>
</dbReference>
<dbReference type="GO" id="GO:0097435">
    <property type="term" value="P:supramolecular fiber organization"/>
    <property type="evidence" value="ECO:0000315"/>
    <property type="project" value="UniProtKB"/>
</dbReference>
<dbReference type="CDD" id="cd00899">
    <property type="entry name" value="b4GalT"/>
    <property type="match status" value="1"/>
</dbReference>
<dbReference type="DisProt" id="DP02634"/>
<dbReference type="FunFam" id="3.90.550.10:FF:000062">
    <property type="entry name" value="beta-1,4-galactosyltransferase 7 isoform X1"/>
    <property type="match status" value="1"/>
</dbReference>
<dbReference type="Gene3D" id="3.90.550.10">
    <property type="entry name" value="Spore Coat Polysaccharide Biosynthesis Protein SpsA, Chain A"/>
    <property type="match status" value="1"/>
</dbReference>
<dbReference type="InterPro" id="IPR003859">
    <property type="entry name" value="Galactosyl_T"/>
</dbReference>
<dbReference type="InterPro" id="IPR027791">
    <property type="entry name" value="Galactosyl_T_C"/>
</dbReference>
<dbReference type="InterPro" id="IPR027995">
    <property type="entry name" value="Galactosyl_T_N"/>
</dbReference>
<dbReference type="InterPro" id="IPR029044">
    <property type="entry name" value="Nucleotide-diphossugar_trans"/>
</dbReference>
<dbReference type="PANTHER" id="PTHR19300">
    <property type="entry name" value="BETA-1,4-GALACTOSYLTRANSFERASE"/>
    <property type="match status" value="1"/>
</dbReference>
<dbReference type="PANTHER" id="PTHR19300:SF30">
    <property type="entry name" value="BETA-1,4-GALACTOSYLTRANSFERASE 7"/>
    <property type="match status" value="1"/>
</dbReference>
<dbReference type="Pfam" id="PF02709">
    <property type="entry name" value="Glyco_transf_7C"/>
    <property type="match status" value="1"/>
</dbReference>
<dbReference type="Pfam" id="PF13733">
    <property type="entry name" value="Glyco_transf_7N"/>
    <property type="match status" value="1"/>
</dbReference>
<dbReference type="PRINTS" id="PR02050">
    <property type="entry name" value="B14GALTRFASE"/>
</dbReference>
<dbReference type="SUPFAM" id="SSF53448">
    <property type="entry name" value="Nucleotide-diphospho-sugar transferases"/>
    <property type="match status" value="1"/>
</dbReference>
<comment type="function">
    <text evidence="4">Required for the biosynthesis of the tetrasaccharide linkage region of proteoglycans, especially for small proteoglycans in skin fibroblasts.</text>
</comment>
<comment type="catalytic activity">
    <reaction evidence="4">
        <text>3-O-(beta-D-xylosyl)-L-seryl-[protein] + UDP-alpha-D-galactose = 3-O-(beta-D-galactosyl-(1-&gt;4)-beta-D-xylosyl)-L-seryl-[protein] + UDP + H(+)</text>
        <dbReference type="Rhea" id="RHEA:15297"/>
        <dbReference type="Rhea" id="RHEA-COMP:12567"/>
        <dbReference type="Rhea" id="RHEA-COMP:12570"/>
        <dbReference type="ChEBI" id="CHEBI:15378"/>
        <dbReference type="ChEBI" id="CHEBI:58223"/>
        <dbReference type="ChEBI" id="CHEBI:66914"/>
        <dbReference type="ChEBI" id="CHEBI:132085"/>
        <dbReference type="ChEBI" id="CHEBI:132088"/>
        <dbReference type="EC" id="2.4.1.133"/>
    </reaction>
</comment>
<comment type="cofactor">
    <cofactor evidence="4">
        <name>Mn(2+)</name>
        <dbReference type="ChEBI" id="CHEBI:29035"/>
    </cofactor>
</comment>
<comment type="pathway">
    <text>Protein modification; protein glycosylation.</text>
</comment>
<comment type="interaction">
    <interactant intactId="EBI-10319970">
        <id>Q9UBV7</id>
    </interactant>
    <interactant intactId="EBI-3867333">
        <id>A8MQ03</id>
        <label>CYSRT1</label>
    </interactant>
    <organismsDiffer>false</organismsDiffer>
    <experiments>3</experiments>
</comment>
<comment type="interaction">
    <interactant intactId="EBI-10319970">
        <id>Q9UBV7</id>
    </interactant>
    <interactant intactId="EBI-948001">
        <id>Q15323</id>
        <label>KRT31</label>
    </interactant>
    <organismsDiffer>false</organismsDiffer>
    <experiments>3</experiments>
</comment>
<comment type="interaction">
    <interactant intactId="EBI-10319970">
        <id>Q9UBV7</id>
    </interactant>
    <interactant intactId="EBI-10172290">
        <id>P60409</id>
        <label>KRTAP10-7</label>
    </interactant>
    <organismsDiffer>false</organismsDiffer>
    <experiments>3</experiments>
</comment>
<comment type="interaction">
    <interactant intactId="EBI-10319970">
        <id>Q9UBV7</id>
    </interactant>
    <interactant intactId="EBI-536715">
        <id>P53611</id>
        <label>RABGGTB</label>
    </interactant>
    <organismsDiffer>false</organismsDiffer>
    <experiments>6</experiments>
</comment>
<comment type="interaction">
    <interactant intactId="EBI-10319970">
        <id>Q9UBV7</id>
    </interactant>
    <interactant intactId="EBI-8638294">
        <id>Q9NUH8</id>
        <label>TMEM14B</label>
    </interactant>
    <organismsDiffer>false</organismsDiffer>
    <experiments>3</experiments>
</comment>
<comment type="subcellular location">
    <subcellularLocation>
        <location>Golgi apparatus</location>
        <location>Golgi stack membrane</location>
        <topology>Single-pass type II membrane protein</topology>
    </subcellularLocation>
    <text>Cis cisternae of Golgi stack.</text>
</comment>
<comment type="tissue specificity">
    <text>High expression in heart, pancreas and liver, medium in placenta and kidney, low in brain, skeletal muscle and lung.</text>
</comment>
<comment type="disease" evidence="3">
    <disease id="DI-00435">
        <name>Ehlers-Danlos syndrome, spondylodysplastic type, 1</name>
        <acronym>EDSSPD1</acronym>
        <description>A form of Ehlers-Danlos syndrome, a group of connective tissue disorders characterized by skin hyperextensibility, articular hypermobility, and tissue fragility. EDSSPD1 is an autosomal recessive form characterized by short stature, developmental anomalies of the forearm bones and elbow, and bowing of extremities, in addition to the classic features of Ehlers-Danlos syndrome.</description>
        <dbReference type="MIM" id="130070"/>
    </disease>
    <text>The disease is caused by variants affecting the gene represented in this entry.</text>
</comment>
<comment type="similarity">
    <text evidence="6">Belongs to the glycosyltransferase 7 family.</text>
</comment>
<comment type="online information" name="Functional Glycomics Gateway - GTase">
    <link uri="http://www.functionalglycomics.org/glycomics/molecule/jsp/glycoEnzyme/viewGlycoEnzyme.jsp?gbpId=gt_hum_442"/>
    <text>Beta-1,4-galactosyltransferase 7</text>
</comment>
<protein>
    <recommendedName>
        <fullName>Beta-1,4-galactosyltransferase 7</fullName>
        <shortName>Beta-1,4-GalTase 7</shortName>
        <shortName>Beta4Gal-T7</shortName>
        <shortName>b4Gal-T7</shortName>
        <ecNumber>2.4.1.-</ecNumber>
    </recommendedName>
    <alternativeName>
        <fullName>Proteoglycan UDP-galactose:beta-xylose beta1,4-galactosyltransferase I</fullName>
    </alternativeName>
    <alternativeName>
        <fullName>UDP-Gal:beta-GlcNAc beta-1,4-galactosyltransferase 7</fullName>
    </alternativeName>
    <alternativeName>
        <fullName>UDP-galactose:beta-N-acetylglucosamine beta-1,4-galactosyltransferase 7</fullName>
    </alternativeName>
    <alternativeName>
        <fullName>UDP-galactose:beta-xylose beta-1,4-galactosyltransferase</fullName>
    </alternativeName>
    <alternativeName>
        <fullName>XGPT</fullName>
    </alternativeName>
    <alternativeName>
        <fullName>XGalT-1</fullName>
    </alternativeName>
    <alternativeName>
        <fullName>Xylosylprotein 4-beta-galactosyltransferase</fullName>
        <ecNumber>2.4.1.133</ecNumber>
    </alternativeName>
    <alternativeName>
        <fullName>Xylosylprotein beta-1,4-galactosyltransferase</fullName>
    </alternativeName>
</protein>
<reference key="1">
    <citation type="journal article" date="1999" name="J. Biol. Chem.">
        <title>Cloning and expression of a proteoglycan UDP-galactose:beta-xylose beta1,4-galactosyltransferase I. A seventh member of the human beta4-galactosyltransferase gene family.</title>
        <authorList>
            <person name="Almeida R."/>
            <person name="Levery S.B."/>
            <person name="Mandel U."/>
            <person name="Kresse H."/>
            <person name="Schwientek T."/>
            <person name="Bennett E.P."/>
            <person name="Clausen H."/>
        </authorList>
    </citation>
    <scope>NUCLEOTIDE SEQUENCE [MRNA]</scope>
</reference>
<reference key="2">
    <citation type="journal article" date="1999" name="J. Biol. Chem.">
        <title>Human homolog of Caenorhabditis elegans sqv-3 gene is galactosyltransferase I involved in the biosynthesis of the glycosaminoglycan-protein linkage region of proteoglycans.</title>
        <authorList>
            <person name="Okajima T."/>
            <person name="Yoshida K."/>
            <person name="Kondo T."/>
            <person name="Furukawa K."/>
        </authorList>
    </citation>
    <scope>NUCLEOTIDE SEQUENCE [MRNA]</scope>
    <source>
        <tissue>Melanoma</tissue>
    </source>
</reference>
<reference key="3">
    <citation type="submission" date="1999-04" db="EMBL/GenBank/DDBJ databases">
        <title>Human beta-1,4-galactosyltransferase VII.</title>
        <authorList>
            <person name="Lo N.-W."/>
            <person name="Shaper N.L."/>
            <person name="Shaper J.H."/>
        </authorList>
    </citation>
    <scope>NUCLEOTIDE SEQUENCE [MRNA]</scope>
</reference>
<reference key="4">
    <citation type="journal article" date="2003" name="Genome Res.">
        <title>The secreted protein discovery initiative (SPDI), a large-scale effort to identify novel human secreted and transmembrane proteins: a bioinformatics assessment.</title>
        <authorList>
            <person name="Clark H.F."/>
            <person name="Gurney A.L."/>
            <person name="Abaya E."/>
            <person name="Baker K."/>
            <person name="Baldwin D.T."/>
            <person name="Brush J."/>
            <person name="Chen J."/>
            <person name="Chow B."/>
            <person name="Chui C."/>
            <person name="Crowley C."/>
            <person name="Currell B."/>
            <person name="Deuel B."/>
            <person name="Dowd P."/>
            <person name="Eaton D."/>
            <person name="Foster J.S."/>
            <person name="Grimaldi C."/>
            <person name="Gu Q."/>
            <person name="Hass P.E."/>
            <person name="Heldens S."/>
            <person name="Huang A."/>
            <person name="Kim H.S."/>
            <person name="Klimowski L."/>
            <person name="Jin Y."/>
            <person name="Johnson S."/>
            <person name="Lee J."/>
            <person name="Lewis L."/>
            <person name="Liao D."/>
            <person name="Mark M.R."/>
            <person name="Robbie E."/>
            <person name="Sanchez C."/>
            <person name="Schoenfeld J."/>
            <person name="Seshagiri S."/>
            <person name="Simmons L."/>
            <person name="Singh J."/>
            <person name="Smith V."/>
            <person name="Stinson J."/>
            <person name="Vagts A."/>
            <person name="Vandlen R.L."/>
            <person name="Watanabe C."/>
            <person name="Wieand D."/>
            <person name="Woods K."/>
            <person name="Xie M.-H."/>
            <person name="Yansura D.G."/>
            <person name="Yi S."/>
            <person name="Yu G."/>
            <person name="Yuan J."/>
            <person name="Zhang M."/>
            <person name="Zhang Z."/>
            <person name="Goddard A.D."/>
            <person name="Wood W.I."/>
            <person name="Godowski P.J."/>
            <person name="Gray A.M."/>
        </authorList>
    </citation>
    <scope>NUCLEOTIDE SEQUENCE [LARGE SCALE MRNA]</scope>
</reference>
<reference key="5">
    <citation type="journal article" date="2004" name="Nat. Genet.">
        <title>Complete sequencing and characterization of 21,243 full-length human cDNAs.</title>
        <authorList>
            <person name="Ota T."/>
            <person name="Suzuki Y."/>
            <person name="Nishikawa T."/>
            <person name="Otsuki T."/>
            <person name="Sugiyama T."/>
            <person name="Irie R."/>
            <person name="Wakamatsu A."/>
            <person name="Hayashi K."/>
            <person name="Sato H."/>
            <person name="Nagai K."/>
            <person name="Kimura K."/>
            <person name="Makita H."/>
            <person name="Sekine M."/>
            <person name="Obayashi M."/>
            <person name="Nishi T."/>
            <person name="Shibahara T."/>
            <person name="Tanaka T."/>
            <person name="Ishii S."/>
            <person name="Yamamoto J."/>
            <person name="Saito K."/>
            <person name="Kawai Y."/>
            <person name="Isono Y."/>
            <person name="Nakamura Y."/>
            <person name="Nagahari K."/>
            <person name="Murakami K."/>
            <person name="Yasuda T."/>
            <person name="Iwayanagi T."/>
            <person name="Wagatsuma M."/>
            <person name="Shiratori A."/>
            <person name="Sudo H."/>
            <person name="Hosoiri T."/>
            <person name="Kaku Y."/>
            <person name="Kodaira H."/>
            <person name="Kondo H."/>
            <person name="Sugawara M."/>
            <person name="Takahashi M."/>
            <person name="Kanda K."/>
            <person name="Yokoi T."/>
            <person name="Furuya T."/>
            <person name="Kikkawa E."/>
            <person name="Omura Y."/>
            <person name="Abe K."/>
            <person name="Kamihara K."/>
            <person name="Katsuta N."/>
            <person name="Sato K."/>
            <person name="Tanikawa M."/>
            <person name="Yamazaki M."/>
            <person name="Ninomiya K."/>
            <person name="Ishibashi T."/>
            <person name="Yamashita H."/>
            <person name="Murakawa K."/>
            <person name="Fujimori K."/>
            <person name="Tanai H."/>
            <person name="Kimata M."/>
            <person name="Watanabe M."/>
            <person name="Hiraoka S."/>
            <person name="Chiba Y."/>
            <person name="Ishida S."/>
            <person name="Ono Y."/>
            <person name="Takiguchi S."/>
            <person name="Watanabe S."/>
            <person name="Yosida M."/>
            <person name="Hotuta T."/>
            <person name="Kusano J."/>
            <person name="Kanehori K."/>
            <person name="Takahashi-Fujii A."/>
            <person name="Hara H."/>
            <person name="Tanase T.-O."/>
            <person name="Nomura Y."/>
            <person name="Togiya S."/>
            <person name="Komai F."/>
            <person name="Hara R."/>
            <person name="Takeuchi K."/>
            <person name="Arita M."/>
            <person name="Imose N."/>
            <person name="Musashino K."/>
            <person name="Yuuki H."/>
            <person name="Oshima A."/>
            <person name="Sasaki N."/>
            <person name="Aotsuka S."/>
            <person name="Yoshikawa Y."/>
            <person name="Matsunawa H."/>
            <person name="Ichihara T."/>
            <person name="Shiohata N."/>
            <person name="Sano S."/>
            <person name="Moriya S."/>
            <person name="Momiyama H."/>
            <person name="Satoh N."/>
            <person name="Takami S."/>
            <person name="Terashima Y."/>
            <person name="Suzuki O."/>
            <person name="Nakagawa S."/>
            <person name="Senoh A."/>
            <person name="Mizoguchi H."/>
            <person name="Goto Y."/>
            <person name="Shimizu F."/>
            <person name="Wakebe H."/>
            <person name="Hishigaki H."/>
            <person name="Watanabe T."/>
            <person name="Sugiyama A."/>
            <person name="Takemoto M."/>
            <person name="Kawakami B."/>
            <person name="Yamazaki M."/>
            <person name="Watanabe K."/>
            <person name="Kumagai A."/>
            <person name="Itakura S."/>
            <person name="Fukuzumi Y."/>
            <person name="Fujimori Y."/>
            <person name="Komiyama M."/>
            <person name="Tashiro H."/>
            <person name="Tanigami A."/>
            <person name="Fujiwara T."/>
            <person name="Ono T."/>
            <person name="Yamada K."/>
            <person name="Fujii Y."/>
            <person name="Ozaki K."/>
            <person name="Hirao M."/>
            <person name="Ohmori Y."/>
            <person name="Kawabata A."/>
            <person name="Hikiji T."/>
            <person name="Kobatake N."/>
            <person name="Inagaki H."/>
            <person name="Ikema Y."/>
            <person name="Okamoto S."/>
            <person name="Okitani R."/>
            <person name="Kawakami T."/>
            <person name="Noguchi S."/>
            <person name="Itoh T."/>
            <person name="Shigeta K."/>
            <person name="Senba T."/>
            <person name="Matsumura K."/>
            <person name="Nakajima Y."/>
            <person name="Mizuno T."/>
            <person name="Morinaga M."/>
            <person name="Sasaki M."/>
            <person name="Togashi T."/>
            <person name="Oyama M."/>
            <person name="Hata H."/>
            <person name="Watanabe M."/>
            <person name="Komatsu T."/>
            <person name="Mizushima-Sugano J."/>
            <person name="Satoh T."/>
            <person name="Shirai Y."/>
            <person name="Takahashi Y."/>
            <person name="Nakagawa K."/>
            <person name="Okumura K."/>
            <person name="Nagase T."/>
            <person name="Nomura N."/>
            <person name="Kikuchi H."/>
            <person name="Masuho Y."/>
            <person name="Yamashita R."/>
            <person name="Nakai K."/>
            <person name="Yada T."/>
            <person name="Nakamura Y."/>
            <person name="Ohara O."/>
            <person name="Isogai T."/>
            <person name="Sugano S."/>
        </authorList>
    </citation>
    <scope>NUCLEOTIDE SEQUENCE [LARGE SCALE MRNA]</scope>
    <source>
        <tissue>Placenta</tissue>
    </source>
</reference>
<reference key="6">
    <citation type="submission" date="2005-07" db="EMBL/GenBank/DDBJ databases">
        <authorList>
            <person name="Mural R.J."/>
            <person name="Istrail S."/>
            <person name="Sutton G.G."/>
            <person name="Florea L."/>
            <person name="Halpern A.L."/>
            <person name="Mobarry C.M."/>
            <person name="Lippert R."/>
            <person name="Walenz B."/>
            <person name="Shatkay H."/>
            <person name="Dew I."/>
            <person name="Miller J.R."/>
            <person name="Flanigan M.J."/>
            <person name="Edwards N.J."/>
            <person name="Bolanos R."/>
            <person name="Fasulo D."/>
            <person name="Halldorsson B.V."/>
            <person name="Hannenhalli S."/>
            <person name="Turner R."/>
            <person name="Yooseph S."/>
            <person name="Lu F."/>
            <person name="Nusskern D.R."/>
            <person name="Shue B.C."/>
            <person name="Zheng X.H."/>
            <person name="Zhong F."/>
            <person name="Delcher A.L."/>
            <person name="Huson D.H."/>
            <person name="Kravitz S.A."/>
            <person name="Mouchard L."/>
            <person name="Reinert K."/>
            <person name="Remington K.A."/>
            <person name="Clark A.G."/>
            <person name="Waterman M.S."/>
            <person name="Eichler E.E."/>
            <person name="Adams M.D."/>
            <person name="Hunkapiller M.W."/>
            <person name="Myers E.W."/>
            <person name="Venter J.C."/>
        </authorList>
    </citation>
    <scope>NUCLEOTIDE SEQUENCE [LARGE SCALE GENOMIC DNA]</scope>
</reference>
<reference key="7">
    <citation type="journal article" date="2004" name="Genome Res.">
        <title>The status, quality, and expansion of the NIH full-length cDNA project: the Mammalian Gene Collection (MGC).</title>
        <authorList>
            <consortium name="The MGC Project Team"/>
        </authorList>
    </citation>
    <scope>NUCLEOTIDE SEQUENCE [LARGE SCALE MRNA]</scope>
    <source>
        <tissue>Pancreas</tissue>
        <tissue>Skin</tissue>
    </source>
</reference>
<reference key="8">
    <citation type="journal article" date="2013" name="J. Biol. Chem.">
        <title>Crystal structures of beta-1,4-galactosyltransferase 7 enzyme reveal conformational changes and substrate Binding.</title>
        <authorList>
            <person name="Tsutsui Y."/>
            <person name="Ramakrishnan B."/>
            <person name="Qasba P.K."/>
        </authorList>
    </citation>
    <scope>X-RAY CRYSTALLOGRAPHY (2.1 ANGSTROMS) OF 81-327 IN COMPLEX WITH UDP AND MANGANESE IONS</scope>
    <scope>CATALYTIC ACTIVITY</scope>
    <scope>FUNCTION</scope>
    <scope>COFACTOR</scope>
</reference>
<reference key="9">
    <citation type="journal article" date="1999" name="J. Biol. Chem.">
        <title>Molecular basis for the progeroid variant of Ehlers-Danlos syndrome. Identification and characterization of two mutations in galactosyltransferase I gene.</title>
        <authorList>
            <person name="Okajima T."/>
            <person name="Fukumoto S."/>
            <person name="Furukawa K."/>
            <person name="Urano T."/>
        </authorList>
    </citation>
    <scope>VARIANTS EDSSPD1 ASP-186 AND PRO-206</scope>
</reference>
<reference key="10">
    <citation type="journal article" date="1999" name="Biochim. Biophys. Acta">
        <title>Identification and characterization of large galactosyltransferase gene families: galactosyltransferases for all functions.</title>
        <authorList>
            <person name="Amado M."/>
            <person name="Almeida R."/>
            <person name="Schwientek T."/>
            <person name="Clausen H."/>
        </authorList>
    </citation>
    <scope>REVIEW</scope>
</reference>
<feature type="chain" id="PRO_0000080550" description="Beta-1,4-galactosyltransferase 7">
    <location>
        <begin position="1"/>
        <end position="327"/>
    </location>
</feature>
<feature type="topological domain" description="Cytoplasmic" evidence="1">
    <location>
        <begin position="1"/>
        <end position="30"/>
    </location>
</feature>
<feature type="transmembrane region" description="Helical; Signal-anchor for type II membrane protein" evidence="1">
    <location>
        <begin position="31"/>
        <end position="51"/>
    </location>
</feature>
<feature type="topological domain" description="Lumenal" evidence="1">
    <location>
        <begin position="52"/>
        <end position="327"/>
    </location>
</feature>
<feature type="region of interest" description="Disordered" evidence="2">
    <location>
        <begin position="63"/>
        <end position="87"/>
    </location>
</feature>
<feature type="binding site" evidence="4 7 8">
    <location>
        <begin position="100"/>
        <end position="104"/>
    </location>
    <ligand>
        <name>UDP-alpha-D-galactose</name>
        <dbReference type="ChEBI" id="CHEBI:66914"/>
    </ligand>
</feature>
<feature type="binding site" evidence="5">
    <location>
        <begin position="139"/>
        <end position="141"/>
    </location>
    <ligand>
        <name>UDP-alpha-D-galactose</name>
        <dbReference type="ChEBI" id="CHEBI:66914"/>
    </ligand>
</feature>
<feature type="binding site" evidence="4 7 8">
    <location>
        <begin position="164"/>
        <end position="165"/>
    </location>
    <ligand>
        <name>UDP-alpha-D-galactose</name>
        <dbReference type="ChEBI" id="CHEBI:66914"/>
    </ligand>
</feature>
<feature type="binding site" evidence="4 7 8">
    <location>
        <position position="165"/>
    </location>
    <ligand>
        <name>Mn(2+)</name>
        <dbReference type="ChEBI" id="CHEBI:29035"/>
    </ligand>
</feature>
<feature type="binding site" evidence="4 7 8">
    <location>
        <position position="194"/>
    </location>
    <ligand>
        <name>UDP-alpha-D-galactose</name>
        <dbReference type="ChEBI" id="CHEBI:66914"/>
    </ligand>
</feature>
<feature type="binding site" evidence="4 8">
    <location>
        <position position="224"/>
    </location>
    <ligand>
        <name>UDP-alpha-D-galactose</name>
        <dbReference type="ChEBI" id="CHEBI:66914"/>
    </ligand>
</feature>
<feature type="binding site" evidence="6">
    <location>
        <begin position="226"/>
        <end position="229"/>
    </location>
    <ligand>
        <name>N-acetyl-D-glucosamine</name>
        <dbReference type="ChEBI" id="CHEBI:506227"/>
    </ligand>
</feature>
<feature type="binding site" evidence="4 8">
    <location>
        <begin position="257"/>
        <end position="259"/>
    </location>
    <ligand>
        <name>UDP-alpha-D-galactose</name>
        <dbReference type="ChEBI" id="CHEBI:66914"/>
    </ligand>
</feature>
<feature type="binding site" evidence="4 7 8">
    <location>
        <position position="257"/>
    </location>
    <ligand>
        <name>Mn(2+)</name>
        <dbReference type="ChEBI" id="CHEBI:29035"/>
    </ligand>
</feature>
<feature type="binding site" evidence="4 8">
    <location>
        <position position="266"/>
    </location>
    <ligand>
        <name>UDP-alpha-D-galactose</name>
        <dbReference type="ChEBI" id="CHEBI:66914"/>
    </ligand>
</feature>
<feature type="glycosylation site" description="N-linked (GlcNAc...) asparagine" evidence="1">
    <location>
        <position position="154"/>
    </location>
</feature>
<feature type="disulfide bond">
    <location>
        <begin position="316"/>
        <end position="324"/>
    </location>
</feature>
<feature type="sequence variant" id="VAR_010293" description="In EDSSPD1; dbSNP:rs121917817." evidence="3">
    <original>A</original>
    <variation>D</variation>
    <location>
        <position position="186"/>
    </location>
</feature>
<feature type="sequence variant" id="VAR_010294" description="In EDSSPD1; dbSNP:rs121917818." evidence="3">
    <original>L</original>
    <variation>P</variation>
    <location>
        <position position="206"/>
    </location>
</feature>
<feature type="sequence conflict" description="In Ref. 3; AAF22225." evidence="6" ref="3">
    <original>V</original>
    <variation>L</variation>
    <location>
        <position position="147"/>
    </location>
</feature>
<feature type="helix" evidence="9">
    <location>
        <begin position="82"/>
        <end position="84"/>
    </location>
</feature>
<feature type="helix" evidence="9">
    <location>
        <begin position="88"/>
        <end position="90"/>
    </location>
</feature>
<feature type="strand" evidence="9">
    <location>
        <begin position="95"/>
        <end position="103"/>
    </location>
</feature>
<feature type="helix" evidence="9">
    <location>
        <begin position="105"/>
        <end position="121"/>
    </location>
</feature>
<feature type="strand" evidence="9">
    <location>
        <begin position="126"/>
        <end position="133"/>
    </location>
</feature>
<feature type="strand" evidence="9">
    <location>
        <begin position="135"/>
        <end position="137"/>
    </location>
</feature>
<feature type="helix" evidence="9">
    <location>
        <begin position="141"/>
        <end position="151"/>
    </location>
</feature>
<feature type="strand" evidence="9">
    <location>
        <begin position="158"/>
        <end position="162"/>
    </location>
</feature>
<feature type="strand" evidence="9">
    <location>
        <begin position="166"/>
        <end position="168"/>
    </location>
</feature>
<feature type="strand" evidence="9">
    <location>
        <begin position="183"/>
        <end position="186"/>
    </location>
</feature>
<feature type="turn" evidence="9">
    <location>
        <begin position="188"/>
        <end position="190"/>
    </location>
</feature>
<feature type="strand" evidence="9">
    <location>
        <begin position="191"/>
        <end position="193"/>
    </location>
</feature>
<feature type="strand" evidence="9">
    <location>
        <begin position="202"/>
        <end position="207"/>
    </location>
</feature>
<feature type="helix" evidence="9">
    <location>
        <begin position="208"/>
        <end position="213"/>
    </location>
</feature>
<feature type="strand" evidence="10">
    <location>
        <begin position="223"/>
        <end position="226"/>
    </location>
</feature>
<feature type="helix" evidence="9">
    <location>
        <begin position="227"/>
        <end position="237"/>
    </location>
</feature>
<feature type="helix" evidence="10">
    <location>
        <begin position="251"/>
        <end position="253"/>
    </location>
</feature>
<feature type="strand" evidence="9">
    <location>
        <begin position="254"/>
        <end position="257"/>
    </location>
</feature>
<feature type="turn" evidence="10">
    <location>
        <begin position="261"/>
        <end position="263"/>
    </location>
</feature>
<feature type="helix" evidence="10">
    <location>
        <begin position="274"/>
        <end position="277"/>
    </location>
</feature>
<feature type="turn" evidence="9">
    <location>
        <begin position="287"/>
        <end position="289"/>
    </location>
</feature>
<feature type="strand" evidence="9">
    <location>
        <begin position="292"/>
        <end position="302"/>
    </location>
</feature>
<feature type="strand" evidence="9">
    <location>
        <begin position="305"/>
        <end position="314"/>
    </location>
</feature>
<feature type="turn" evidence="9">
    <location>
        <begin position="318"/>
        <end position="320"/>
    </location>
</feature>
<feature type="helix" evidence="9">
    <location>
        <begin position="322"/>
        <end position="325"/>
    </location>
</feature>
<accession>Q9UBV7</accession>
<accession>B3KN39</accession>
<accession>Q9UHN2</accession>
<evidence type="ECO:0000255" key="1"/>
<evidence type="ECO:0000256" key="2">
    <source>
        <dbReference type="SAM" id="MobiDB-lite"/>
    </source>
</evidence>
<evidence type="ECO:0000269" key="3">
    <source>
    </source>
</evidence>
<evidence type="ECO:0000269" key="4">
    <source>
    </source>
</evidence>
<evidence type="ECO:0000303" key="5">
    <source>
    </source>
</evidence>
<evidence type="ECO:0000305" key="6"/>
<evidence type="ECO:0007744" key="7">
    <source>
        <dbReference type="PDB" id="4IRP"/>
    </source>
</evidence>
<evidence type="ECO:0007744" key="8">
    <source>
        <dbReference type="PDB" id="4IRQ"/>
    </source>
</evidence>
<evidence type="ECO:0007829" key="9">
    <source>
        <dbReference type="PDB" id="4IRP"/>
    </source>
</evidence>
<evidence type="ECO:0007829" key="10">
    <source>
        <dbReference type="PDB" id="4IRQ"/>
    </source>
</evidence>
<name>B4GT7_HUMAN</name>
<sequence length="327" mass="37406">MFPSRRKAAQLPWEDGRSGLLSGGLPRKCSVFHLFVACLSLGFFSLLWLQLSCSGDVARAVRGQGQETSGPPRACPPEPPPEHWEEDASWGPHRLAVLVPFRERFEELLVFVPHMRRFLSRKKIRHHIYVLNQVDHFRFNRAALINVGFLESSNSTDYIAMHDVDLLPLNEELDYGFPEAGPFHVASPELHPLYHYKTYVGGILLLSKQHYRLCNGMSNRFWGWGREDDEFYRRIKGAGLQLFRPSGITTGYKTFRHLHDPAWRKRDQKRIAAQKQEQFKVDREGGLNTVKYHVASRTALSVGGAPCTVLNIMLDCDKTATPWCTFS</sequence>
<proteinExistence type="evidence at protein level"/>